<organism>
    <name type="scientific">Staphylococcus aureus (strain NCTC 8325 / PS 47)</name>
    <dbReference type="NCBI Taxonomy" id="93061"/>
    <lineage>
        <taxon>Bacteria</taxon>
        <taxon>Bacillati</taxon>
        <taxon>Bacillota</taxon>
        <taxon>Bacilli</taxon>
        <taxon>Bacillales</taxon>
        <taxon>Staphylococcaceae</taxon>
        <taxon>Staphylococcus</taxon>
    </lineage>
</organism>
<feature type="chain" id="PRO_0000256114" description="ATP synthase subunit alpha">
    <location>
        <begin position="1"/>
        <end position="502"/>
    </location>
</feature>
<feature type="binding site" evidence="1">
    <location>
        <begin position="169"/>
        <end position="176"/>
    </location>
    <ligand>
        <name>ATP</name>
        <dbReference type="ChEBI" id="CHEBI:30616"/>
    </ligand>
</feature>
<feature type="site" description="Required for activity" evidence="1">
    <location>
        <position position="362"/>
    </location>
</feature>
<proteinExistence type="inferred from homology"/>
<protein>
    <recommendedName>
        <fullName evidence="1">ATP synthase subunit alpha</fullName>
        <ecNumber evidence="1">7.1.2.2</ecNumber>
    </recommendedName>
    <alternativeName>
        <fullName evidence="1">ATP synthase F1 sector subunit alpha</fullName>
    </alternativeName>
    <alternativeName>
        <fullName evidence="1">F-ATPase subunit alpha</fullName>
    </alternativeName>
</protein>
<name>ATPA_STAA8</name>
<reference key="1">
    <citation type="book" date="2006" name="Gram positive pathogens, 2nd edition">
        <title>The Staphylococcus aureus NCTC 8325 genome.</title>
        <editorList>
            <person name="Fischetti V."/>
            <person name="Novick R."/>
            <person name="Ferretti J."/>
            <person name="Portnoy D."/>
            <person name="Rood J."/>
        </editorList>
        <authorList>
            <person name="Gillaspy A.F."/>
            <person name="Worrell V."/>
            <person name="Orvis J."/>
            <person name="Roe B.A."/>
            <person name="Dyer D.W."/>
            <person name="Iandolo J.J."/>
        </authorList>
    </citation>
    <scope>NUCLEOTIDE SEQUENCE [LARGE SCALE GENOMIC DNA]</scope>
    <source>
        <strain>NCTC 8325 / PS 47</strain>
    </source>
</reference>
<evidence type="ECO:0000255" key="1">
    <source>
        <dbReference type="HAMAP-Rule" id="MF_01346"/>
    </source>
</evidence>
<comment type="function">
    <text evidence="1">Produces ATP from ADP in the presence of a proton gradient across the membrane. The alpha chain is a regulatory subunit.</text>
</comment>
<comment type="catalytic activity">
    <reaction evidence="1">
        <text>ATP + H2O + 4 H(+)(in) = ADP + phosphate + 5 H(+)(out)</text>
        <dbReference type="Rhea" id="RHEA:57720"/>
        <dbReference type="ChEBI" id="CHEBI:15377"/>
        <dbReference type="ChEBI" id="CHEBI:15378"/>
        <dbReference type="ChEBI" id="CHEBI:30616"/>
        <dbReference type="ChEBI" id="CHEBI:43474"/>
        <dbReference type="ChEBI" id="CHEBI:456216"/>
        <dbReference type="EC" id="7.1.2.2"/>
    </reaction>
</comment>
<comment type="subunit">
    <text evidence="1">F-type ATPases have 2 components, CF(1) - the catalytic core - and CF(0) - the membrane proton channel. CF(1) has five subunits: alpha(3), beta(3), gamma(1), delta(1), epsilon(1). CF(0) has three main subunits: a(1), b(2) and c(9-12). The alpha and beta chains form an alternating ring which encloses part of the gamma chain. CF(1) is attached to CF(0) by a central stalk formed by the gamma and epsilon chains, while a peripheral stalk is formed by the delta and b chains.</text>
</comment>
<comment type="subcellular location">
    <subcellularLocation>
        <location evidence="1">Cell membrane</location>
        <topology evidence="1">Peripheral membrane protein</topology>
    </subcellularLocation>
</comment>
<comment type="similarity">
    <text evidence="1">Belongs to the ATPase alpha/beta chains family.</text>
</comment>
<keyword id="KW-0066">ATP synthesis</keyword>
<keyword id="KW-0067">ATP-binding</keyword>
<keyword id="KW-1003">Cell membrane</keyword>
<keyword id="KW-0139">CF(1)</keyword>
<keyword id="KW-0375">Hydrogen ion transport</keyword>
<keyword id="KW-0406">Ion transport</keyword>
<keyword id="KW-0472">Membrane</keyword>
<keyword id="KW-0547">Nucleotide-binding</keyword>
<keyword id="KW-1185">Reference proteome</keyword>
<keyword id="KW-1278">Translocase</keyword>
<keyword id="KW-0813">Transport</keyword>
<gene>
    <name evidence="1" type="primary">atpA</name>
    <name type="ordered locus">SAOUHSC_02345</name>
</gene>
<sequence>MAIKAEEISALLRSQIENYESEMSVTDVGTVLQIGDGIALIHGLNDVMAGELVEFHNGVLGLAQNLEESNVGVVILGPYTGITEGDEVKRTGRIMEVPVGEELIGRVVNPLGQPIDGQGPINTTKTRPVEKKATGVMDRKSVDEPLQTGIKAIDALVPIGRGQRELIIGDRQTGKTTIAIDTILNQKDQGTICIYVAIGQKDSTVRANVEKLRQAGALDYTIVVAASASEPSPLLYIAPYSGVTMGEEFMFNGKHVLIVYDDLTKQAAAYRELSLLLRRPPGREAYPGDVFYLHSRLLERAAKLNDDLGGGSITALPIIETQAGDISAYVPTNVISITDGQIFLQSDLFFSGVRPAINAGQSVSRVGGSAQIKAMKKVAGTLRLDLASYRELESFAQFGSDLDEFTASKLERGKRTVEVLKQDQNKPLPVEHQVLIIYALTKGYLDDIPVVDITRFEDELNHWAESNATELLNEIRETGGLPDAEKFDTAINEFKKSFSKSE</sequence>
<dbReference type="EC" id="7.1.2.2" evidence="1"/>
<dbReference type="EMBL" id="CP000253">
    <property type="protein sequence ID" value="ABD31377.1"/>
    <property type="molecule type" value="Genomic_DNA"/>
</dbReference>
<dbReference type="RefSeq" id="WP_000974881.1">
    <property type="nucleotide sequence ID" value="NZ_LS483365.1"/>
</dbReference>
<dbReference type="RefSeq" id="YP_500822.1">
    <property type="nucleotide sequence ID" value="NC_007795.1"/>
</dbReference>
<dbReference type="SMR" id="Q2FWE8"/>
<dbReference type="STRING" id="93061.SAOUHSC_02345"/>
<dbReference type="PaxDb" id="1280-SAXN108_2350"/>
<dbReference type="GeneID" id="3920968"/>
<dbReference type="KEGG" id="sao:SAOUHSC_02345"/>
<dbReference type="PATRIC" id="fig|93061.5.peg.2123"/>
<dbReference type="eggNOG" id="COG0056">
    <property type="taxonomic scope" value="Bacteria"/>
</dbReference>
<dbReference type="HOGENOM" id="CLU_010091_2_1_9"/>
<dbReference type="OrthoDB" id="9803053at2"/>
<dbReference type="PHI-base" id="PHI:10773"/>
<dbReference type="PRO" id="PR:Q2FWE8"/>
<dbReference type="Proteomes" id="UP000008816">
    <property type="component" value="Chromosome"/>
</dbReference>
<dbReference type="GO" id="GO:0005886">
    <property type="term" value="C:plasma membrane"/>
    <property type="evidence" value="ECO:0007669"/>
    <property type="project" value="UniProtKB-SubCell"/>
</dbReference>
<dbReference type="GO" id="GO:0045259">
    <property type="term" value="C:proton-transporting ATP synthase complex"/>
    <property type="evidence" value="ECO:0007669"/>
    <property type="project" value="UniProtKB-KW"/>
</dbReference>
<dbReference type="GO" id="GO:0043531">
    <property type="term" value="F:ADP binding"/>
    <property type="evidence" value="ECO:0000318"/>
    <property type="project" value="GO_Central"/>
</dbReference>
<dbReference type="GO" id="GO:0005524">
    <property type="term" value="F:ATP binding"/>
    <property type="evidence" value="ECO:0000318"/>
    <property type="project" value="GO_Central"/>
</dbReference>
<dbReference type="GO" id="GO:0046933">
    <property type="term" value="F:proton-transporting ATP synthase activity, rotational mechanism"/>
    <property type="evidence" value="ECO:0007669"/>
    <property type="project" value="UniProtKB-UniRule"/>
</dbReference>
<dbReference type="GO" id="GO:0015986">
    <property type="term" value="P:proton motive force-driven ATP synthesis"/>
    <property type="evidence" value="ECO:0000318"/>
    <property type="project" value="GO_Central"/>
</dbReference>
<dbReference type="CDD" id="cd18113">
    <property type="entry name" value="ATP-synt_F1_alpha_C"/>
    <property type="match status" value="1"/>
</dbReference>
<dbReference type="CDD" id="cd18116">
    <property type="entry name" value="ATP-synt_F1_alpha_N"/>
    <property type="match status" value="1"/>
</dbReference>
<dbReference type="CDD" id="cd01132">
    <property type="entry name" value="F1-ATPase_alpha_CD"/>
    <property type="match status" value="1"/>
</dbReference>
<dbReference type="FunFam" id="1.20.150.20:FF:000001">
    <property type="entry name" value="ATP synthase subunit alpha"/>
    <property type="match status" value="1"/>
</dbReference>
<dbReference type="FunFam" id="2.40.30.20:FF:000001">
    <property type="entry name" value="ATP synthase subunit alpha"/>
    <property type="match status" value="1"/>
</dbReference>
<dbReference type="FunFam" id="3.40.50.300:FF:000002">
    <property type="entry name" value="ATP synthase subunit alpha"/>
    <property type="match status" value="1"/>
</dbReference>
<dbReference type="Gene3D" id="2.40.30.20">
    <property type="match status" value="1"/>
</dbReference>
<dbReference type="Gene3D" id="1.20.150.20">
    <property type="entry name" value="ATP synthase alpha/beta chain, C-terminal domain"/>
    <property type="match status" value="1"/>
</dbReference>
<dbReference type="Gene3D" id="3.40.50.300">
    <property type="entry name" value="P-loop containing nucleotide triphosphate hydrolases"/>
    <property type="match status" value="1"/>
</dbReference>
<dbReference type="HAMAP" id="MF_01346">
    <property type="entry name" value="ATP_synth_alpha_bact"/>
    <property type="match status" value="1"/>
</dbReference>
<dbReference type="InterPro" id="IPR023366">
    <property type="entry name" value="ATP_synth_asu-like_sf"/>
</dbReference>
<dbReference type="InterPro" id="IPR000793">
    <property type="entry name" value="ATP_synth_asu_C"/>
</dbReference>
<dbReference type="InterPro" id="IPR038376">
    <property type="entry name" value="ATP_synth_asu_C_sf"/>
</dbReference>
<dbReference type="InterPro" id="IPR033732">
    <property type="entry name" value="ATP_synth_F1_a_nt-bd_dom"/>
</dbReference>
<dbReference type="InterPro" id="IPR005294">
    <property type="entry name" value="ATP_synth_F1_asu"/>
</dbReference>
<dbReference type="InterPro" id="IPR020003">
    <property type="entry name" value="ATPase_a/bsu_AS"/>
</dbReference>
<dbReference type="InterPro" id="IPR004100">
    <property type="entry name" value="ATPase_F1/V1/A1_a/bsu_N"/>
</dbReference>
<dbReference type="InterPro" id="IPR036121">
    <property type="entry name" value="ATPase_F1/V1/A1_a/bsu_N_sf"/>
</dbReference>
<dbReference type="InterPro" id="IPR000194">
    <property type="entry name" value="ATPase_F1/V1/A1_a/bsu_nucl-bd"/>
</dbReference>
<dbReference type="InterPro" id="IPR027417">
    <property type="entry name" value="P-loop_NTPase"/>
</dbReference>
<dbReference type="NCBIfam" id="TIGR00962">
    <property type="entry name" value="atpA"/>
    <property type="match status" value="1"/>
</dbReference>
<dbReference type="NCBIfam" id="NF009884">
    <property type="entry name" value="PRK13343.1"/>
    <property type="match status" value="1"/>
</dbReference>
<dbReference type="PANTHER" id="PTHR48082">
    <property type="entry name" value="ATP SYNTHASE SUBUNIT ALPHA, MITOCHONDRIAL"/>
    <property type="match status" value="1"/>
</dbReference>
<dbReference type="PANTHER" id="PTHR48082:SF2">
    <property type="entry name" value="ATP SYNTHASE SUBUNIT ALPHA, MITOCHONDRIAL"/>
    <property type="match status" value="1"/>
</dbReference>
<dbReference type="Pfam" id="PF00006">
    <property type="entry name" value="ATP-synt_ab"/>
    <property type="match status" value="1"/>
</dbReference>
<dbReference type="Pfam" id="PF00306">
    <property type="entry name" value="ATP-synt_ab_C"/>
    <property type="match status" value="1"/>
</dbReference>
<dbReference type="Pfam" id="PF02874">
    <property type="entry name" value="ATP-synt_ab_N"/>
    <property type="match status" value="1"/>
</dbReference>
<dbReference type="PIRSF" id="PIRSF039088">
    <property type="entry name" value="F_ATPase_subunit_alpha"/>
    <property type="match status" value="1"/>
</dbReference>
<dbReference type="SUPFAM" id="SSF47917">
    <property type="entry name" value="C-terminal domain of alpha and beta subunits of F1 ATP synthase"/>
    <property type="match status" value="1"/>
</dbReference>
<dbReference type="SUPFAM" id="SSF50615">
    <property type="entry name" value="N-terminal domain of alpha and beta subunits of F1 ATP synthase"/>
    <property type="match status" value="1"/>
</dbReference>
<dbReference type="SUPFAM" id="SSF52540">
    <property type="entry name" value="P-loop containing nucleoside triphosphate hydrolases"/>
    <property type="match status" value="1"/>
</dbReference>
<dbReference type="PROSITE" id="PS00152">
    <property type="entry name" value="ATPASE_ALPHA_BETA"/>
    <property type="match status" value="1"/>
</dbReference>
<accession>Q2FWE8</accession>